<gene>
    <name type="primary">sumo2</name>
    <name type="ORF">TEgg046d06.1</name>
</gene>
<name>SUMO2_XENTR</name>
<dbReference type="EMBL" id="CR761130">
    <property type="protein sequence ID" value="CAJ81672.1"/>
    <property type="molecule type" value="mRNA"/>
</dbReference>
<dbReference type="RefSeq" id="NP_001016406.1">
    <property type="nucleotide sequence ID" value="NM_001016406.2"/>
</dbReference>
<dbReference type="SMR" id="Q28H04"/>
<dbReference type="FunCoup" id="Q28H04">
    <property type="interactions" value="3549"/>
</dbReference>
<dbReference type="STRING" id="8364.ENSXETP00000047241"/>
<dbReference type="PaxDb" id="8364-ENSXETP00000027383"/>
<dbReference type="GeneID" id="549160"/>
<dbReference type="KEGG" id="xtr:549160"/>
<dbReference type="AGR" id="Xenbase:XB-GENE-969139"/>
<dbReference type="CTD" id="6613"/>
<dbReference type="Xenbase" id="XB-GENE-969139">
    <property type="gene designation" value="sumo2"/>
</dbReference>
<dbReference type="eggNOG" id="KOG1769">
    <property type="taxonomic scope" value="Eukaryota"/>
</dbReference>
<dbReference type="HOGENOM" id="CLU_148322_2_1_1"/>
<dbReference type="InParanoid" id="Q28H04"/>
<dbReference type="OMA" id="MVHINLK"/>
<dbReference type="OrthoDB" id="9925208at2759"/>
<dbReference type="PhylomeDB" id="Q28H04"/>
<dbReference type="TreeFam" id="TF315116"/>
<dbReference type="Reactome" id="R-XTR-196791">
    <property type="pathway name" value="Vitamin D (calciferol) metabolism"/>
</dbReference>
<dbReference type="Reactome" id="R-XTR-3065679">
    <property type="pathway name" value="SUMO is proteolytically processed"/>
</dbReference>
<dbReference type="Reactome" id="R-XTR-3108214">
    <property type="pathway name" value="SUMOylation of DNA damage response and repair proteins"/>
</dbReference>
<dbReference type="Reactome" id="R-XTR-3232118">
    <property type="pathway name" value="SUMOylation of transcription factors"/>
</dbReference>
<dbReference type="Reactome" id="R-XTR-3899300">
    <property type="pathway name" value="SUMOylation of transcription cofactors"/>
</dbReference>
<dbReference type="Reactome" id="R-XTR-4085377">
    <property type="pathway name" value="SUMOylation of SUMOylation proteins"/>
</dbReference>
<dbReference type="Reactome" id="R-XTR-4090294">
    <property type="pathway name" value="SUMOylation of intracellular receptors"/>
</dbReference>
<dbReference type="Reactome" id="R-XTR-4570464">
    <property type="pathway name" value="SUMOylation of RNA binding proteins"/>
</dbReference>
<dbReference type="Reactome" id="R-XTR-4615885">
    <property type="pathway name" value="SUMOylation of DNA replication proteins"/>
</dbReference>
<dbReference type="Proteomes" id="UP000008143">
    <property type="component" value="Chromosome 10"/>
</dbReference>
<dbReference type="Bgee" id="ENSXETG00000012516">
    <property type="expression patterns" value="Expressed in gastrula and 18 other cell types or tissues"/>
</dbReference>
<dbReference type="ExpressionAtlas" id="Q28H04">
    <property type="expression patterns" value="baseline"/>
</dbReference>
<dbReference type="GO" id="GO:0005634">
    <property type="term" value="C:nucleus"/>
    <property type="evidence" value="ECO:0007669"/>
    <property type="project" value="UniProtKB-SubCell"/>
</dbReference>
<dbReference type="CDD" id="cd16115">
    <property type="entry name" value="Ubl_SUMO2_3_4"/>
    <property type="match status" value="1"/>
</dbReference>
<dbReference type="FunFam" id="3.10.20.90:FF:000482">
    <property type="entry name" value="Small ubiquitin-related modifier 2"/>
    <property type="match status" value="1"/>
</dbReference>
<dbReference type="Gene3D" id="3.10.20.90">
    <property type="entry name" value="Phosphatidylinositol 3-kinase Catalytic Subunit, Chain A, domain 1"/>
    <property type="match status" value="1"/>
</dbReference>
<dbReference type="InterPro" id="IPR022617">
    <property type="entry name" value="Rad60/SUMO-like_dom"/>
</dbReference>
<dbReference type="InterPro" id="IPR000626">
    <property type="entry name" value="Ubiquitin-like_dom"/>
</dbReference>
<dbReference type="InterPro" id="IPR029071">
    <property type="entry name" value="Ubiquitin-like_domsf"/>
</dbReference>
<dbReference type="PANTHER" id="PTHR10562">
    <property type="entry name" value="SMALL UBIQUITIN-RELATED MODIFIER"/>
    <property type="match status" value="1"/>
</dbReference>
<dbReference type="Pfam" id="PF11976">
    <property type="entry name" value="Rad60-SLD"/>
    <property type="match status" value="1"/>
</dbReference>
<dbReference type="SMART" id="SM00213">
    <property type="entry name" value="UBQ"/>
    <property type="match status" value="1"/>
</dbReference>
<dbReference type="SUPFAM" id="SSF54236">
    <property type="entry name" value="Ubiquitin-like"/>
    <property type="match status" value="1"/>
</dbReference>
<dbReference type="PROSITE" id="PS50053">
    <property type="entry name" value="UBIQUITIN_2"/>
    <property type="match status" value="1"/>
</dbReference>
<keyword id="KW-1017">Isopeptide bond</keyword>
<keyword id="KW-0539">Nucleus</keyword>
<keyword id="KW-1185">Reference proteome</keyword>
<keyword id="KW-0832">Ubl conjugation</keyword>
<keyword id="KW-0833">Ubl conjugation pathway</keyword>
<feature type="chain" id="PRO_0000269475" description="Small ubiquitin-related modifier 2">
    <location>
        <begin position="1"/>
        <end position="93"/>
    </location>
</feature>
<feature type="propeptide" id="PRO_0000269476" evidence="1">
    <location>
        <begin position="94"/>
        <end position="95"/>
    </location>
</feature>
<feature type="domain" description="Ubiquitin-like" evidence="2">
    <location>
        <begin position="16"/>
        <end position="95"/>
    </location>
</feature>
<feature type="cross-link" description="Glycyl lysine isopeptide (Lys-Gly) (interchain with G-Cter in SUMO)" evidence="1">
    <location>
        <position position="11"/>
    </location>
</feature>
<feature type="cross-link" description="Glycyl lysine isopeptide (Gly-Lys) (interchain with K-? in acceptor proteins)" evidence="2">
    <location>
        <position position="93"/>
    </location>
</feature>
<sequence length="95" mass="10856">MADDKPKEGVKTENNDHINLKVAGQDGSVVQFKIKRHTPLNKLMKAYCERQGLSMRQIRFRFDGQPINETDTPAQLEMEDEDTIDVFQQQTGGSF</sequence>
<protein>
    <recommendedName>
        <fullName>Small ubiquitin-related modifier 2</fullName>
        <shortName>SUMO-2</shortName>
    </recommendedName>
</protein>
<comment type="function">
    <text evidence="1">Ubiquitin-like protein that can be covalently attached to proteins as a monomer or as a lysine-linked polymer. Covalent attachment via an isopeptide bond to its substrates requires prior activation by the E1 complex sae1-sae2 and linkage to the E2 enzyme ube2i, and can be promoted by an E3 ligase such as pias1-4. This post-translational modification on lysine residues of proteins plays a crucial role in a number of cellular processes such as nuclear transport, DNA replication and repair, mitosis and signal transduction. Polymeric sumo2 chains are also susceptible to polyubiquitination which functions as a signal for proteasomal degradation of modified proteins (By similarity).</text>
</comment>
<comment type="subunit">
    <text evidence="1">Interacts with sae2 and ube2i. Covalently attached to a number of proteins, including top2 (By similarity).</text>
</comment>
<comment type="subcellular location">
    <subcellularLocation>
        <location evidence="1">Nucleus</location>
    </subcellularLocation>
</comment>
<comment type="PTM">
    <text evidence="1">Polymeric chains can be formed through Lys-11 cross-linking.</text>
</comment>
<comment type="PTM">
    <text evidence="1">Cleavage of precursor form by a sentrin-specific protease is necessary for function.</text>
</comment>
<comment type="similarity">
    <text evidence="3">Belongs to the ubiquitin family. SUMO subfamily.</text>
</comment>
<proteinExistence type="inferred from homology"/>
<reference key="1">
    <citation type="submission" date="2006-06" db="EMBL/GenBank/DDBJ databases">
        <authorList>
            <consortium name="NIH - Xenopus Gene Collection (XGC) project"/>
        </authorList>
    </citation>
    <scope>NUCLEOTIDE SEQUENCE [LARGE SCALE MRNA]</scope>
    <source>
        <tissue>Egg</tissue>
    </source>
</reference>
<accession>Q28H04</accession>
<organism>
    <name type="scientific">Xenopus tropicalis</name>
    <name type="common">Western clawed frog</name>
    <name type="synonym">Silurana tropicalis</name>
    <dbReference type="NCBI Taxonomy" id="8364"/>
    <lineage>
        <taxon>Eukaryota</taxon>
        <taxon>Metazoa</taxon>
        <taxon>Chordata</taxon>
        <taxon>Craniata</taxon>
        <taxon>Vertebrata</taxon>
        <taxon>Euteleostomi</taxon>
        <taxon>Amphibia</taxon>
        <taxon>Batrachia</taxon>
        <taxon>Anura</taxon>
        <taxon>Pipoidea</taxon>
        <taxon>Pipidae</taxon>
        <taxon>Xenopodinae</taxon>
        <taxon>Xenopus</taxon>
        <taxon>Silurana</taxon>
    </lineage>
</organism>
<evidence type="ECO:0000250" key="1"/>
<evidence type="ECO:0000255" key="2">
    <source>
        <dbReference type="PROSITE-ProRule" id="PRU00214"/>
    </source>
</evidence>
<evidence type="ECO:0000305" key="3"/>